<sequence>MDKLTPSQWKVINKSYEPASTIKVIAGPGSGKTLTLLYKVLHLITVENIKPEEILIFSLTNKAVDSIIENLLSIFENSHTNKEIVHQIGCYTVHGLANRIVVENEGMINIIEEIGWRGLMKLLPPSKRTPHHFRSYKELEKVVKDYKLNNAKNNNPVIEKLVELMDNCKVMTNDDLIIRAKKYLELDSSDSDASSFTQDLRNKYKVVLIDEFQDLYPSLAPLITMICKGKQLIMFGDTNQSIYGFLGSNNEIMSQLDNLHPKNSTTVLKLFDNFRSTPEIISLASKIINRPLAEKQIIDDTDETPSELVRKLPSGVSPQIMTFDDLAAESEFIIDKITQLICSSAKFSDIAILSRTNSHLTAIASILKKYGIPYQKLKSQPDWMDDLRIQFLLDILKVCSLASDEKHNREFNTGDKWQSNFSILVTMSALKGIGDASIQALYKACSLKNLSIWKYLTMVPNFEWPLGLSIKKKMENYTSNLYEMIENDQVHQLDDPMELLEKVASITNNLNLNPTYFQSLSDAQSSLEFKTHLQEMAQVMKVSKSNKPPGISFVKWFLETYFDQTMVFHQSQQALQTTGPGTVKLSTIHSAKGLEFPIVFLTNGSMSNFPMDTNALYVGITRARNLLYMCNMKHERLVSKSSPYSRNIMSNNLFWTYYNKDLKRSVCDVKVTHGYNVQRYNQLRKNFGFYRAYSSLRGCKSVFRRI</sequence>
<name>HMI1_YEAST</name>
<comment type="function">
    <text evidence="4">Required for mitochondrial genome maintenance and mitochondrial DNA inheritance.</text>
</comment>
<comment type="catalytic activity">
    <reaction>
        <text>Couples ATP hydrolysis with the unwinding of duplex DNA by translocating in the 3'-5' direction.</text>
        <dbReference type="EC" id="5.6.2.4"/>
    </reaction>
</comment>
<comment type="catalytic activity">
    <reaction>
        <text>ATP + H2O = ADP + phosphate + H(+)</text>
        <dbReference type="Rhea" id="RHEA:13065"/>
        <dbReference type="ChEBI" id="CHEBI:15377"/>
        <dbReference type="ChEBI" id="CHEBI:15378"/>
        <dbReference type="ChEBI" id="CHEBI:30616"/>
        <dbReference type="ChEBI" id="CHEBI:43474"/>
        <dbReference type="ChEBI" id="CHEBI:456216"/>
        <dbReference type="EC" id="5.6.2.4"/>
    </reaction>
</comment>
<comment type="cofactor">
    <cofactor evidence="4">
        <name>Mg(2+)</name>
        <dbReference type="ChEBI" id="CHEBI:18420"/>
    </cofactor>
</comment>
<comment type="subcellular location">
    <subcellularLocation>
        <location evidence="6">Mitochondrion inner membrane</location>
        <topology evidence="6">Peripheral membrane protein</topology>
    </subcellularLocation>
</comment>
<comment type="similarity">
    <text evidence="5">Belongs to the helicase family. UvrD subfamily.</text>
</comment>
<comment type="sequence caution" evidence="5">
    <conflict type="erroneous initiation">
        <sequence resource="EMBL-CDS" id="CAA88166"/>
    </conflict>
</comment>
<dbReference type="EC" id="5.6.2.4"/>
<dbReference type="EMBL" id="U26030">
    <property type="protein sequence ID" value="AAC49064.1"/>
    <property type="molecule type" value="Genomic_DNA"/>
</dbReference>
<dbReference type="EMBL" id="Z48149">
    <property type="protein sequence ID" value="CAA88166.1"/>
    <property type="status" value="ALT_INIT"/>
    <property type="molecule type" value="Genomic_DNA"/>
</dbReference>
<dbReference type="EMBL" id="X83121">
    <property type="protein sequence ID" value="CAA58184.1"/>
    <property type="molecule type" value="Genomic_DNA"/>
</dbReference>
<dbReference type="EMBL" id="Z74837">
    <property type="protein sequence ID" value="CAA99107.1"/>
    <property type="molecule type" value="Genomic_DNA"/>
</dbReference>
<dbReference type="EMBL" id="BK006948">
    <property type="protein sequence ID" value="DAA10689.1"/>
    <property type="molecule type" value="Genomic_DNA"/>
</dbReference>
<dbReference type="PIR" id="S57374">
    <property type="entry name" value="S57374"/>
</dbReference>
<dbReference type="RefSeq" id="NP_014546.1">
    <property type="nucleotide sequence ID" value="NM_001183349.1"/>
</dbReference>
<dbReference type="SMR" id="Q12039"/>
<dbReference type="BioGRID" id="34307">
    <property type="interactions" value="319"/>
</dbReference>
<dbReference type="DIP" id="DIP-4225N"/>
<dbReference type="FunCoup" id="Q12039">
    <property type="interactions" value="26"/>
</dbReference>
<dbReference type="MINT" id="Q12039"/>
<dbReference type="STRING" id="4932.YOL095C"/>
<dbReference type="iPTMnet" id="Q12039"/>
<dbReference type="PaxDb" id="4932-YOL095C"/>
<dbReference type="PeptideAtlas" id="Q12039"/>
<dbReference type="EnsemblFungi" id="YOL095C_mRNA">
    <property type="protein sequence ID" value="YOL095C"/>
    <property type="gene ID" value="YOL095C"/>
</dbReference>
<dbReference type="GeneID" id="854058"/>
<dbReference type="KEGG" id="sce:YOL095C"/>
<dbReference type="AGR" id="SGD:S000005455"/>
<dbReference type="SGD" id="S000005455">
    <property type="gene designation" value="HMI1"/>
</dbReference>
<dbReference type="VEuPathDB" id="FungiDB:YOL095C"/>
<dbReference type="eggNOG" id="KOG2108">
    <property type="taxonomic scope" value="Eukaryota"/>
</dbReference>
<dbReference type="GeneTree" id="ENSGT00390000011669"/>
<dbReference type="HOGENOM" id="CLU_004585_7_0_1"/>
<dbReference type="InParanoid" id="Q12039"/>
<dbReference type="OMA" id="ENGWRGL"/>
<dbReference type="OrthoDB" id="1470711at2759"/>
<dbReference type="BioCyc" id="YEAST:G3O-33495-MONOMER"/>
<dbReference type="BRENDA" id="3.6.4.12">
    <property type="organism ID" value="984"/>
</dbReference>
<dbReference type="BioGRID-ORCS" id="854058">
    <property type="hits" value="4 hits in 10 CRISPR screens"/>
</dbReference>
<dbReference type="PRO" id="PR:Q12039"/>
<dbReference type="Proteomes" id="UP000002311">
    <property type="component" value="Chromosome XV"/>
</dbReference>
<dbReference type="RNAct" id="Q12039">
    <property type="molecule type" value="protein"/>
</dbReference>
<dbReference type="GO" id="GO:0005743">
    <property type="term" value="C:mitochondrial inner membrane"/>
    <property type="evidence" value="ECO:0007669"/>
    <property type="project" value="UniProtKB-SubCell"/>
</dbReference>
<dbReference type="GO" id="GO:0005759">
    <property type="term" value="C:mitochondrial matrix"/>
    <property type="evidence" value="ECO:0000314"/>
    <property type="project" value="SGD"/>
</dbReference>
<dbReference type="GO" id="GO:0005739">
    <property type="term" value="C:mitochondrion"/>
    <property type="evidence" value="ECO:0007005"/>
    <property type="project" value="SGD"/>
</dbReference>
<dbReference type="GO" id="GO:0005634">
    <property type="term" value="C:nucleus"/>
    <property type="evidence" value="ECO:0000318"/>
    <property type="project" value="GO_Central"/>
</dbReference>
<dbReference type="GO" id="GO:0043138">
    <property type="term" value="F:3'-5' DNA helicase activity"/>
    <property type="evidence" value="ECO:0000314"/>
    <property type="project" value="SGD"/>
</dbReference>
<dbReference type="GO" id="GO:0005524">
    <property type="term" value="F:ATP binding"/>
    <property type="evidence" value="ECO:0007669"/>
    <property type="project" value="UniProtKB-KW"/>
</dbReference>
<dbReference type="GO" id="GO:0016887">
    <property type="term" value="F:ATP hydrolysis activity"/>
    <property type="evidence" value="ECO:0007669"/>
    <property type="project" value="RHEA"/>
</dbReference>
<dbReference type="GO" id="GO:0003677">
    <property type="term" value="F:DNA binding"/>
    <property type="evidence" value="ECO:0007669"/>
    <property type="project" value="UniProtKB-KW"/>
</dbReference>
<dbReference type="GO" id="GO:0032042">
    <property type="term" value="P:mitochondrial DNA metabolic process"/>
    <property type="evidence" value="ECO:0000315"/>
    <property type="project" value="SGD"/>
</dbReference>
<dbReference type="GO" id="GO:0000002">
    <property type="term" value="P:mitochondrial genome maintenance"/>
    <property type="evidence" value="ECO:0000315"/>
    <property type="project" value="SGD"/>
</dbReference>
<dbReference type="GO" id="GO:0000725">
    <property type="term" value="P:recombinational repair"/>
    <property type="evidence" value="ECO:0000318"/>
    <property type="project" value="GO_Central"/>
</dbReference>
<dbReference type="CDD" id="cd17932">
    <property type="entry name" value="DEXQc_UvrD"/>
    <property type="match status" value="1"/>
</dbReference>
<dbReference type="Gene3D" id="3.40.50.300">
    <property type="entry name" value="P-loop containing nucleotide triphosphate hydrolases"/>
    <property type="match status" value="2"/>
</dbReference>
<dbReference type="Gene3D" id="1.10.486.10">
    <property type="entry name" value="PCRA, domain 4"/>
    <property type="match status" value="1"/>
</dbReference>
<dbReference type="InterPro" id="IPR014017">
    <property type="entry name" value="DNA_helicase_UvrD-like_C"/>
</dbReference>
<dbReference type="InterPro" id="IPR000212">
    <property type="entry name" value="DNA_helicase_UvrD/REP"/>
</dbReference>
<dbReference type="InterPro" id="IPR027417">
    <property type="entry name" value="P-loop_NTPase"/>
</dbReference>
<dbReference type="InterPro" id="IPR014016">
    <property type="entry name" value="UvrD-like_ATP-bd"/>
</dbReference>
<dbReference type="PANTHER" id="PTHR11070:SF46">
    <property type="entry name" value="ATP-DEPENDENT DNA HELICASE HMI1, MITOCHONDRIAL"/>
    <property type="match status" value="1"/>
</dbReference>
<dbReference type="PANTHER" id="PTHR11070">
    <property type="entry name" value="UVRD / RECB / PCRA DNA HELICASE FAMILY MEMBER"/>
    <property type="match status" value="1"/>
</dbReference>
<dbReference type="Pfam" id="PF00580">
    <property type="entry name" value="UvrD-helicase"/>
    <property type="match status" value="1"/>
</dbReference>
<dbReference type="Pfam" id="PF13361">
    <property type="entry name" value="UvrD_C"/>
    <property type="match status" value="1"/>
</dbReference>
<dbReference type="SUPFAM" id="SSF52540">
    <property type="entry name" value="P-loop containing nucleoside triphosphate hydrolases"/>
    <property type="match status" value="1"/>
</dbReference>
<dbReference type="PROSITE" id="PS51198">
    <property type="entry name" value="UVRD_HELICASE_ATP_BIND"/>
    <property type="match status" value="1"/>
</dbReference>
<dbReference type="PROSITE" id="PS51217">
    <property type="entry name" value="UVRD_HELICASE_CTER"/>
    <property type="match status" value="1"/>
</dbReference>
<keyword id="KW-0067">ATP-binding</keyword>
<keyword id="KW-0227">DNA damage</keyword>
<keyword id="KW-0234">DNA repair</keyword>
<keyword id="KW-0238">DNA-binding</keyword>
<keyword id="KW-0347">Helicase</keyword>
<keyword id="KW-0378">Hydrolase</keyword>
<keyword id="KW-0413">Isomerase</keyword>
<keyword id="KW-0460">Magnesium</keyword>
<keyword id="KW-0472">Membrane</keyword>
<keyword id="KW-0496">Mitochondrion</keyword>
<keyword id="KW-0999">Mitochondrion inner membrane</keyword>
<keyword id="KW-0547">Nucleotide-binding</keyword>
<keyword id="KW-1185">Reference proteome</keyword>
<gene>
    <name type="primary">HMI1</name>
    <name type="ordered locus">YOL095C</name>
    <name type="ORF">O0920</name>
</gene>
<reference key="1">
    <citation type="journal article" date="1992" name="Mol. Cell. Biol.">
        <title>Identification of replication factor C from Saccharomyces cerevisiae: a component of the leading-strand DNA replication complex.</title>
        <authorList>
            <person name="Fien K."/>
            <person name="Stillman B."/>
        </authorList>
    </citation>
    <scope>NUCLEOTIDE SEQUENCE [GENOMIC DNA]</scope>
    <source>
        <strain>ATCC 204508 / S288c</strain>
    </source>
</reference>
<reference key="2">
    <citation type="journal article" date="1995" name="Yeast">
        <title>Sequence analysis of a 44 kb DNA fragment of yeast chromosome XV including the Ty1-H3 retrotransposon, the suf1(+) frameshift suppressor gene for tRNA-Gly, the yeast transfer RNA-Thr-1a and a delta element.</title>
        <authorList>
            <person name="Vandenbol M."/>
            <person name="Durand P."/>
            <person name="Portetelle D."/>
            <person name="Hilger F."/>
        </authorList>
    </citation>
    <scope>NUCLEOTIDE SEQUENCE [GENOMIC DNA]</scope>
</reference>
<reference key="3">
    <citation type="journal article" date="1995" name="Yeast">
        <title>A 29.425 kb segment on the left arm of yeast chromosome XV contains more than twice as many unknown as known open reading frames.</title>
        <authorList>
            <person name="Zumstein E."/>
            <person name="Pearson B.M."/>
            <person name="Kalogeropoulos A."/>
            <person name="Schweizer M."/>
        </authorList>
    </citation>
    <scope>NUCLEOTIDE SEQUENCE [GENOMIC DNA]</scope>
    <source>
        <strain>ATCC 96604 / S288c / FY1679</strain>
    </source>
</reference>
<reference key="4">
    <citation type="journal article" date="1997" name="Nature">
        <title>The nucleotide sequence of Saccharomyces cerevisiae chromosome XV.</title>
        <authorList>
            <person name="Dujon B."/>
            <person name="Albermann K."/>
            <person name="Aldea M."/>
            <person name="Alexandraki D."/>
            <person name="Ansorge W."/>
            <person name="Arino J."/>
            <person name="Benes V."/>
            <person name="Bohn C."/>
            <person name="Bolotin-Fukuhara M."/>
            <person name="Bordonne R."/>
            <person name="Boyer J."/>
            <person name="Camasses A."/>
            <person name="Casamayor A."/>
            <person name="Casas C."/>
            <person name="Cheret G."/>
            <person name="Cziepluch C."/>
            <person name="Daignan-Fornier B."/>
            <person name="Dang V.-D."/>
            <person name="de Haan M."/>
            <person name="Delius H."/>
            <person name="Durand P."/>
            <person name="Fairhead C."/>
            <person name="Feldmann H."/>
            <person name="Gaillon L."/>
            <person name="Galisson F."/>
            <person name="Gamo F.-J."/>
            <person name="Gancedo C."/>
            <person name="Goffeau A."/>
            <person name="Goulding S.E."/>
            <person name="Grivell L.A."/>
            <person name="Habbig B."/>
            <person name="Hand N.J."/>
            <person name="Hani J."/>
            <person name="Hattenhorst U."/>
            <person name="Hebling U."/>
            <person name="Hernando Y."/>
            <person name="Herrero E."/>
            <person name="Heumann K."/>
            <person name="Hiesel R."/>
            <person name="Hilger F."/>
            <person name="Hofmann B."/>
            <person name="Hollenberg C.P."/>
            <person name="Hughes B."/>
            <person name="Jauniaux J.-C."/>
            <person name="Kalogeropoulos A."/>
            <person name="Katsoulou C."/>
            <person name="Kordes E."/>
            <person name="Lafuente M.J."/>
            <person name="Landt O."/>
            <person name="Louis E.J."/>
            <person name="Maarse A.C."/>
            <person name="Madania A."/>
            <person name="Mannhaupt G."/>
            <person name="Marck C."/>
            <person name="Martin R.P."/>
            <person name="Mewes H.-W."/>
            <person name="Michaux G."/>
            <person name="Paces V."/>
            <person name="Parle-McDermott A.G."/>
            <person name="Pearson B.M."/>
            <person name="Perrin A."/>
            <person name="Pettersson B."/>
            <person name="Poch O."/>
            <person name="Pohl T.M."/>
            <person name="Poirey R."/>
            <person name="Portetelle D."/>
            <person name="Pujol A."/>
            <person name="Purnelle B."/>
            <person name="Ramezani Rad M."/>
            <person name="Rechmann S."/>
            <person name="Schwager C."/>
            <person name="Schweizer M."/>
            <person name="Sor F."/>
            <person name="Sterky F."/>
            <person name="Tarassov I.A."/>
            <person name="Teodoru C."/>
            <person name="Tettelin H."/>
            <person name="Thierry A."/>
            <person name="Tobiasch E."/>
            <person name="Tzermia M."/>
            <person name="Uhlen M."/>
            <person name="Unseld M."/>
            <person name="Valens M."/>
            <person name="Vandenbol M."/>
            <person name="Vetter I."/>
            <person name="Vlcek C."/>
            <person name="Voet M."/>
            <person name="Volckaert G."/>
            <person name="Voss H."/>
            <person name="Wambutt R."/>
            <person name="Wedler H."/>
            <person name="Wiemann S."/>
            <person name="Winsor B."/>
            <person name="Wolfe K.H."/>
            <person name="Zollner A."/>
            <person name="Zumstein E."/>
            <person name="Kleine K."/>
        </authorList>
    </citation>
    <scope>NUCLEOTIDE SEQUENCE [LARGE SCALE GENOMIC DNA]</scope>
    <source>
        <strain>ATCC 204508 / S288c</strain>
    </source>
</reference>
<reference key="5">
    <citation type="journal article" date="2014" name="G3 (Bethesda)">
        <title>The reference genome sequence of Saccharomyces cerevisiae: Then and now.</title>
        <authorList>
            <person name="Engel S.R."/>
            <person name="Dietrich F.S."/>
            <person name="Fisk D.G."/>
            <person name="Binkley G."/>
            <person name="Balakrishnan R."/>
            <person name="Costanzo M.C."/>
            <person name="Dwight S.S."/>
            <person name="Hitz B.C."/>
            <person name="Karra K."/>
            <person name="Nash R.S."/>
            <person name="Weng S."/>
            <person name="Wong E.D."/>
            <person name="Lloyd P."/>
            <person name="Skrzypek M.S."/>
            <person name="Miyasato S.R."/>
            <person name="Simison M."/>
            <person name="Cherry J.M."/>
        </authorList>
    </citation>
    <scope>GENOME REANNOTATION</scope>
    <source>
        <strain>ATCC 204508 / S288c</strain>
    </source>
</reference>
<reference key="6">
    <citation type="journal article" date="2000" name="Mol. Cell. Biol.">
        <title>A DNA helicase required for maintenance of the functional mitochondrial genome in Saccharomyces cerevisiae.</title>
        <authorList>
            <person name="Sedman T."/>
            <person name="Kuusk S."/>
            <person name="Kivi S."/>
            <person name="Sedman J."/>
        </authorList>
    </citation>
    <scope>FUNCTION</scope>
    <scope>COFACTOR</scope>
    <scope>SUBCELLULAR LOCATION</scope>
    <scope>MUTAGENESIS OF ARG-704 AND ARG-705</scope>
</reference>
<reference key="7">
    <citation type="journal article" date="1999" name="J. Biol. Chem.">
        <title>The DNA helicase, Hmi1p, is transported into mitochondria by a C-terminal cleavable targeting signal.</title>
        <authorList>
            <person name="Lee C.M."/>
            <person name="Sedman J."/>
            <person name="Neupert W."/>
            <person name="Stuart R.A."/>
        </authorList>
    </citation>
    <scope>C-TERMINAL TARGETING DOMAIN</scope>
</reference>
<organism>
    <name type="scientific">Saccharomyces cerevisiae (strain ATCC 204508 / S288c)</name>
    <name type="common">Baker's yeast</name>
    <dbReference type="NCBI Taxonomy" id="559292"/>
    <lineage>
        <taxon>Eukaryota</taxon>
        <taxon>Fungi</taxon>
        <taxon>Dikarya</taxon>
        <taxon>Ascomycota</taxon>
        <taxon>Saccharomycotina</taxon>
        <taxon>Saccharomycetes</taxon>
        <taxon>Saccharomycetales</taxon>
        <taxon>Saccharomycetaceae</taxon>
        <taxon>Saccharomyces</taxon>
    </lineage>
</organism>
<evidence type="ECO:0000250" key="1"/>
<evidence type="ECO:0000255" key="2">
    <source>
        <dbReference type="PROSITE-ProRule" id="PRU00560"/>
    </source>
</evidence>
<evidence type="ECO:0000255" key="3">
    <source>
        <dbReference type="PROSITE-ProRule" id="PRU00617"/>
    </source>
</evidence>
<evidence type="ECO:0000269" key="4">
    <source>
    </source>
</evidence>
<evidence type="ECO:0000305" key="5"/>
<evidence type="ECO:0000305" key="6">
    <source>
    </source>
</evidence>
<accession>Q12039</accession>
<accession>D6W1X3</accession>
<accession>Q05379</accession>
<feature type="chain" id="PRO_0000013297" description="ATP-dependent DNA helicase HMI1, mitochondrial">
    <location>
        <begin position="1"/>
        <end position="692"/>
    </location>
</feature>
<feature type="propeptide" id="PRO_0000013298" description="Cleaved upon import into mitochondrion">
    <location>
        <begin position="693"/>
        <end position="706"/>
    </location>
</feature>
<feature type="domain" description="UvrD-like helicase ATP-binding" evidence="2">
    <location>
        <begin position="5"/>
        <end position="277"/>
    </location>
</feature>
<feature type="domain" description="UvrD-like helicase C-terminal" evidence="3">
    <location>
        <begin position="278"/>
        <end position="593"/>
    </location>
</feature>
<feature type="binding site" evidence="2">
    <location>
        <begin position="29"/>
        <end position="34"/>
    </location>
    <ligand>
        <name>ATP</name>
        <dbReference type="ChEBI" id="CHEBI:30616"/>
    </ligand>
</feature>
<feature type="binding site" evidence="1">
    <location>
        <position position="275"/>
    </location>
    <ligand>
        <name>ATP</name>
        <dbReference type="ChEBI" id="CHEBI:30616"/>
    </ligand>
</feature>
<feature type="mutagenesis site" description="Impaired import into mitochondrion." evidence="4">
    <original>R</original>
    <variation>D</variation>
    <location>
        <position position="704"/>
    </location>
</feature>
<feature type="mutagenesis site" description="Impaired import into mitochondrion." evidence="4">
    <original>R</original>
    <variation>D</variation>
    <location>
        <position position="705"/>
    </location>
</feature>
<proteinExistence type="evidence at protein level"/>
<protein>
    <recommendedName>
        <fullName>ATP-dependent DNA helicase HMI1, mitochondrial</fullName>
        <ecNumber>5.6.2.4</ecNumber>
    </recommendedName>
    <alternativeName>
        <fullName evidence="5">DNA 3'-5' helicase</fullName>
    </alternativeName>
</protein>